<proteinExistence type="inferred from homology"/>
<comment type="function">
    <text evidence="2">Cell wall formation.</text>
</comment>
<comment type="catalytic activity">
    <reaction evidence="2">
        <text>2 D-alanine + ATP = D-alanyl-D-alanine + ADP + phosphate + H(+)</text>
        <dbReference type="Rhea" id="RHEA:11224"/>
        <dbReference type="ChEBI" id="CHEBI:15378"/>
        <dbReference type="ChEBI" id="CHEBI:30616"/>
        <dbReference type="ChEBI" id="CHEBI:43474"/>
        <dbReference type="ChEBI" id="CHEBI:57416"/>
        <dbReference type="ChEBI" id="CHEBI:57822"/>
        <dbReference type="ChEBI" id="CHEBI:456216"/>
        <dbReference type="EC" id="6.3.2.4"/>
    </reaction>
</comment>
<comment type="cofactor">
    <cofactor evidence="1">
        <name>Mg(2+)</name>
        <dbReference type="ChEBI" id="CHEBI:18420"/>
    </cofactor>
    <cofactor evidence="1">
        <name>Mn(2+)</name>
        <dbReference type="ChEBI" id="CHEBI:29035"/>
    </cofactor>
    <text evidence="1">Binds 2 magnesium or manganese ions per subunit.</text>
</comment>
<comment type="pathway">
    <text evidence="2">Cell wall biogenesis; peptidoglycan biosynthesis.</text>
</comment>
<comment type="subcellular location">
    <subcellularLocation>
        <location evidence="2">Cytoplasm</location>
    </subcellularLocation>
</comment>
<comment type="similarity">
    <text evidence="2">Belongs to the D-alanine--D-alanine ligase family.</text>
</comment>
<sequence length="364" mass="41205">MKKNLMLIFGGVSFEHEISLRSAYGIYSSLLKLDKYNVFSVFVDKVTGIWYLLDSVPSSAELIKRHTTSIVNFIPGCGIFVNNKSLEIDVIFPIIHGRTGEDGAIQGFVKMMDIPCVGAGILGSAISINKYFCKVLLKSFNIPVVSFIGFKKDDYILNKEGIKEDINNKLNYPVIVKPSVLGSSIGINVAYNVSQIEKYIEEAFEYDLTVVVEKFIKAREIECAVIGNDQIKIFTPGEIVVQDFIFYDYDAKYSTVPGDSIVFNIPAHLDMKHLLDIKEYAFLTYKYLELRGMARIDFLISKDTNLLYVNEVNTIPGFTDISMFAKMCEHDGLSYESLVDKLITLAFESYKKRKDKIDFTRLES</sequence>
<accession>B5RL25</accession>
<evidence type="ECO:0000250" key="1"/>
<evidence type="ECO:0000255" key="2">
    <source>
        <dbReference type="HAMAP-Rule" id="MF_00047"/>
    </source>
</evidence>
<name>DDL_BORDL</name>
<gene>
    <name evidence="2" type="primary">ddl</name>
    <name type="ordered locus">BDU_198</name>
</gene>
<organism>
    <name type="scientific">Borrelia duttonii (strain Ly)</name>
    <dbReference type="NCBI Taxonomy" id="412419"/>
    <lineage>
        <taxon>Bacteria</taxon>
        <taxon>Pseudomonadati</taxon>
        <taxon>Spirochaetota</taxon>
        <taxon>Spirochaetia</taxon>
        <taxon>Spirochaetales</taxon>
        <taxon>Borreliaceae</taxon>
        <taxon>Borrelia</taxon>
    </lineage>
</organism>
<protein>
    <recommendedName>
        <fullName evidence="2">D-alanine--D-alanine ligase</fullName>
        <ecNumber evidence="2">6.3.2.4</ecNumber>
    </recommendedName>
    <alternativeName>
        <fullName evidence="2">D-Ala-D-Ala ligase</fullName>
    </alternativeName>
    <alternativeName>
        <fullName evidence="2">D-alanylalanine synthetase</fullName>
    </alternativeName>
</protein>
<reference key="1">
    <citation type="journal article" date="2008" name="PLoS Genet.">
        <title>The genome of Borrelia recurrentis, the agent of deadly louse-borne relapsing fever, is a degraded subset of tick-borne Borrelia duttonii.</title>
        <authorList>
            <person name="Lescot M."/>
            <person name="Audic S."/>
            <person name="Robert C."/>
            <person name="Nguyen T.T."/>
            <person name="Blanc G."/>
            <person name="Cutler S.J."/>
            <person name="Wincker P."/>
            <person name="Couloux A."/>
            <person name="Claverie J.-M."/>
            <person name="Raoult D."/>
            <person name="Drancourt M."/>
        </authorList>
    </citation>
    <scope>NUCLEOTIDE SEQUENCE [LARGE SCALE GENOMIC DNA]</scope>
    <source>
        <strain>Ly</strain>
    </source>
</reference>
<keyword id="KW-0067">ATP-binding</keyword>
<keyword id="KW-0133">Cell shape</keyword>
<keyword id="KW-0961">Cell wall biogenesis/degradation</keyword>
<keyword id="KW-0963">Cytoplasm</keyword>
<keyword id="KW-0436">Ligase</keyword>
<keyword id="KW-0460">Magnesium</keyword>
<keyword id="KW-0464">Manganese</keyword>
<keyword id="KW-0479">Metal-binding</keyword>
<keyword id="KW-0547">Nucleotide-binding</keyword>
<keyword id="KW-0573">Peptidoglycan synthesis</keyword>
<dbReference type="EC" id="6.3.2.4" evidence="2"/>
<dbReference type="EMBL" id="CP000976">
    <property type="protein sequence ID" value="ACH93154.1"/>
    <property type="molecule type" value="Genomic_DNA"/>
</dbReference>
<dbReference type="RefSeq" id="WP_012537966.1">
    <property type="nucleotide sequence ID" value="NC_011229.1"/>
</dbReference>
<dbReference type="SMR" id="B5RL25"/>
<dbReference type="STRING" id="412419.BDU_198"/>
<dbReference type="KEGG" id="bdu:BDU_198"/>
<dbReference type="eggNOG" id="COG1181">
    <property type="taxonomic scope" value="Bacteria"/>
</dbReference>
<dbReference type="HOGENOM" id="CLU_039268_0_0_12"/>
<dbReference type="OrthoDB" id="9813261at2"/>
<dbReference type="UniPathway" id="UPA00219"/>
<dbReference type="Proteomes" id="UP000000611">
    <property type="component" value="Chromosome"/>
</dbReference>
<dbReference type="GO" id="GO:0005829">
    <property type="term" value="C:cytosol"/>
    <property type="evidence" value="ECO:0007669"/>
    <property type="project" value="TreeGrafter"/>
</dbReference>
<dbReference type="GO" id="GO:0005524">
    <property type="term" value="F:ATP binding"/>
    <property type="evidence" value="ECO:0007669"/>
    <property type="project" value="UniProtKB-KW"/>
</dbReference>
<dbReference type="GO" id="GO:0008716">
    <property type="term" value="F:D-alanine-D-alanine ligase activity"/>
    <property type="evidence" value="ECO:0007669"/>
    <property type="project" value="UniProtKB-UniRule"/>
</dbReference>
<dbReference type="GO" id="GO:0046872">
    <property type="term" value="F:metal ion binding"/>
    <property type="evidence" value="ECO:0007669"/>
    <property type="project" value="UniProtKB-KW"/>
</dbReference>
<dbReference type="GO" id="GO:0071555">
    <property type="term" value="P:cell wall organization"/>
    <property type="evidence" value="ECO:0007669"/>
    <property type="project" value="UniProtKB-KW"/>
</dbReference>
<dbReference type="GO" id="GO:0009252">
    <property type="term" value="P:peptidoglycan biosynthetic process"/>
    <property type="evidence" value="ECO:0007669"/>
    <property type="project" value="UniProtKB-UniRule"/>
</dbReference>
<dbReference type="GO" id="GO:0008360">
    <property type="term" value="P:regulation of cell shape"/>
    <property type="evidence" value="ECO:0007669"/>
    <property type="project" value="UniProtKB-KW"/>
</dbReference>
<dbReference type="Gene3D" id="3.40.50.20">
    <property type="match status" value="1"/>
</dbReference>
<dbReference type="Gene3D" id="3.30.1490.20">
    <property type="entry name" value="ATP-grasp fold, A domain"/>
    <property type="match status" value="1"/>
</dbReference>
<dbReference type="Gene3D" id="3.30.470.20">
    <property type="entry name" value="ATP-grasp fold, B domain"/>
    <property type="match status" value="1"/>
</dbReference>
<dbReference type="HAMAP" id="MF_00047">
    <property type="entry name" value="Dala_Dala_lig"/>
    <property type="match status" value="1"/>
</dbReference>
<dbReference type="InterPro" id="IPR011761">
    <property type="entry name" value="ATP-grasp"/>
</dbReference>
<dbReference type="InterPro" id="IPR013815">
    <property type="entry name" value="ATP_grasp_subdomain_1"/>
</dbReference>
<dbReference type="InterPro" id="IPR000291">
    <property type="entry name" value="D-Ala_lig_Van_CS"/>
</dbReference>
<dbReference type="InterPro" id="IPR005905">
    <property type="entry name" value="D_ala_D_ala"/>
</dbReference>
<dbReference type="InterPro" id="IPR011095">
    <property type="entry name" value="Dala_Dala_lig_C"/>
</dbReference>
<dbReference type="InterPro" id="IPR011127">
    <property type="entry name" value="Dala_Dala_lig_N"/>
</dbReference>
<dbReference type="InterPro" id="IPR016185">
    <property type="entry name" value="PreATP-grasp_dom_sf"/>
</dbReference>
<dbReference type="NCBIfam" id="TIGR01205">
    <property type="entry name" value="D_ala_D_alaTIGR"/>
    <property type="match status" value="1"/>
</dbReference>
<dbReference type="NCBIfam" id="NF002528">
    <property type="entry name" value="PRK01966.1-4"/>
    <property type="match status" value="1"/>
</dbReference>
<dbReference type="NCBIfam" id="NF011168">
    <property type="entry name" value="PRK14570.1"/>
    <property type="match status" value="1"/>
</dbReference>
<dbReference type="PANTHER" id="PTHR23132">
    <property type="entry name" value="D-ALANINE--D-ALANINE LIGASE"/>
    <property type="match status" value="1"/>
</dbReference>
<dbReference type="PANTHER" id="PTHR23132:SF25">
    <property type="entry name" value="D-ALANINE--D-ALANINE LIGASE A"/>
    <property type="match status" value="1"/>
</dbReference>
<dbReference type="Pfam" id="PF07478">
    <property type="entry name" value="Dala_Dala_lig_C"/>
    <property type="match status" value="1"/>
</dbReference>
<dbReference type="Pfam" id="PF01820">
    <property type="entry name" value="Dala_Dala_lig_N"/>
    <property type="match status" value="1"/>
</dbReference>
<dbReference type="PIRSF" id="PIRSF039102">
    <property type="entry name" value="Ddl/VanB"/>
    <property type="match status" value="1"/>
</dbReference>
<dbReference type="SUPFAM" id="SSF56059">
    <property type="entry name" value="Glutathione synthetase ATP-binding domain-like"/>
    <property type="match status" value="1"/>
</dbReference>
<dbReference type="SUPFAM" id="SSF52440">
    <property type="entry name" value="PreATP-grasp domain"/>
    <property type="match status" value="1"/>
</dbReference>
<dbReference type="PROSITE" id="PS50975">
    <property type="entry name" value="ATP_GRASP"/>
    <property type="match status" value="1"/>
</dbReference>
<dbReference type="PROSITE" id="PS00843">
    <property type="entry name" value="DALA_DALA_LIGASE_1"/>
    <property type="match status" value="1"/>
</dbReference>
<dbReference type="PROSITE" id="PS00844">
    <property type="entry name" value="DALA_DALA_LIGASE_2"/>
    <property type="match status" value="1"/>
</dbReference>
<feature type="chain" id="PRO_1000091161" description="D-alanine--D-alanine ligase">
    <location>
        <begin position="1"/>
        <end position="364"/>
    </location>
</feature>
<feature type="domain" description="ATP-grasp" evidence="2">
    <location>
        <begin position="134"/>
        <end position="344"/>
    </location>
</feature>
<feature type="binding site" evidence="2">
    <location>
        <begin position="167"/>
        <end position="222"/>
    </location>
    <ligand>
        <name>ATP</name>
        <dbReference type="ChEBI" id="CHEBI:30616"/>
    </ligand>
</feature>
<feature type="binding site" evidence="2">
    <location>
        <position position="297"/>
    </location>
    <ligand>
        <name>Mg(2+)</name>
        <dbReference type="ChEBI" id="CHEBI:18420"/>
        <label>1</label>
    </ligand>
</feature>
<feature type="binding site" evidence="2">
    <location>
        <position position="311"/>
    </location>
    <ligand>
        <name>Mg(2+)</name>
        <dbReference type="ChEBI" id="CHEBI:18420"/>
        <label>1</label>
    </ligand>
</feature>
<feature type="binding site" evidence="2">
    <location>
        <position position="311"/>
    </location>
    <ligand>
        <name>Mg(2+)</name>
        <dbReference type="ChEBI" id="CHEBI:18420"/>
        <label>2</label>
    </ligand>
</feature>
<feature type="binding site" evidence="2">
    <location>
        <position position="313"/>
    </location>
    <ligand>
        <name>Mg(2+)</name>
        <dbReference type="ChEBI" id="CHEBI:18420"/>
        <label>2</label>
    </ligand>
</feature>